<name>SYY_STRTD</name>
<accession>Q03IK0</accession>
<organism>
    <name type="scientific">Streptococcus thermophilus (strain ATCC BAA-491 / LMD-9)</name>
    <dbReference type="NCBI Taxonomy" id="322159"/>
    <lineage>
        <taxon>Bacteria</taxon>
        <taxon>Bacillati</taxon>
        <taxon>Bacillota</taxon>
        <taxon>Bacilli</taxon>
        <taxon>Lactobacillales</taxon>
        <taxon>Streptococcaceae</taxon>
        <taxon>Streptococcus</taxon>
    </lineage>
</organism>
<gene>
    <name evidence="1" type="primary">tyrS</name>
    <name type="ordered locus">STER_1847</name>
</gene>
<protein>
    <recommendedName>
        <fullName evidence="1">Tyrosine--tRNA ligase</fullName>
        <ecNumber evidence="1">6.1.1.1</ecNumber>
    </recommendedName>
    <alternativeName>
        <fullName evidence="1">Tyrosyl-tRNA synthetase</fullName>
        <shortName evidence="1">TyrRS</shortName>
    </alternativeName>
</protein>
<evidence type="ECO:0000255" key="1">
    <source>
        <dbReference type="HAMAP-Rule" id="MF_02006"/>
    </source>
</evidence>
<sequence length="418" mass="47211">MTIFEELKARGLIFQTTDEEALVKAFEEGPVSFYTGYDPTADSLHLGHLVAILTSRRLQLAGHKPYALVGGATGLIGDPSFNDAERSLQTKETVEGWVEKIQGQLSRFLDFENGDNKAVMVNNYDWFGSVSFIDFLRDVGKYFTVNYMMSKESVKKRIETGISYTEFAYQIMQGYDFYELNAKYGVTLQIGGSDQWGNMTAGTELLRRKADKSGHVITVPLITDSTGKKFGKSEGNAVWLDATKTTPYEMYQFWLNVMDDDAVRFLKIFTFLSLEEIEEIGKEFDQARHQRLAQKVLAREVVTLVHGKEAYEQAVHITEQLFAGNLKALSARDLKVALNGVPTYEISADENLNIVELLVNAKISPSKRQAREDVQNGAIYINGERVQDLDYTLSDTDKIDNEITVIRRGKKKNFVLTY</sequence>
<comment type="function">
    <text evidence="1">Catalyzes the attachment of tyrosine to tRNA(Tyr) in a two-step reaction: tyrosine is first activated by ATP to form Tyr-AMP and then transferred to the acceptor end of tRNA(Tyr).</text>
</comment>
<comment type="catalytic activity">
    <reaction evidence="1">
        <text>tRNA(Tyr) + L-tyrosine + ATP = L-tyrosyl-tRNA(Tyr) + AMP + diphosphate + H(+)</text>
        <dbReference type="Rhea" id="RHEA:10220"/>
        <dbReference type="Rhea" id="RHEA-COMP:9706"/>
        <dbReference type="Rhea" id="RHEA-COMP:9707"/>
        <dbReference type="ChEBI" id="CHEBI:15378"/>
        <dbReference type="ChEBI" id="CHEBI:30616"/>
        <dbReference type="ChEBI" id="CHEBI:33019"/>
        <dbReference type="ChEBI" id="CHEBI:58315"/>
        <dbReference type="ChEBI" id="CHEBI:78442"/>
        <dbReference type="ChEBI" id="CHEBI:78536"/>
        <dbReference type="ChEBI" id="CHEBI:456215"/>
        <dbReference type="EC" id="6.1.1.1"/>
    </reaction>
</comment>
<comment type="subunit">
    <text evidence="1">Homodimer.</text>
</comment>
<comment type="subcellular location">
    <subcellularLocation>
        <location evidence="1">Cytoplasm</location>
    </subcellularLocation>
</comment>
<comment type="similarity">
    <text evidence="1">Belongs to the class-I aminoacyl-tRNA synthetase family. TyrS type 1 subfamily.</text>
</comment>
<reference key="1">
    <citation type="journal article" date="2006" name="Proc. Natl. Acad. Sci. U.S.A.">
        <title>Comparative genomics of the lactic acid bacteria.</title>
        <authorList>
            <person name="Makarova K.S."/>
            <person name="Slesarev A."/>
            <person name="Wolf Y.I."/>
            <person name="Sorokin A."/>
            <person name="Mirkin B."/>
            <person name="Koonin E.V."/>
            <person name="Pavlov A."/>
            <person name="Pavlova N."/>
            <person name="Karamychev V."/>
            <person name="Polouchine N."/>
            <person name="Shakhova V."/>
            <person name="Grigoriev I."/>
            <person name="Lou Y."/>
            <person name="Rohksar D."/>
            <person name="Lucas S."/>
            <person name="Huang K."/>
            <person name="Goodstein D.M."/>
            <person name="Hawkins T."/>
            <person name="Plengvidhya V."/>
            <person name="Welker D."/>
            <person name="Hughes J."/>
            <person name="Goh Y."/>
            <person name="Benson A."/>
            <person name="Baldwin K."/>
            <person name="Lee J.-H."/>
            <person name="Diaz-Muniz I."/>
            <person name="Dosti B."/>
            <person name="Smeianov V."/>
            <person name="Wechter W."/>
            <person name="Barabote R."/>
            <person name="Lorca G."/>
            <person name="Altermann E."/>
            <person name="Barrangou R."/>
            <person name="Ganesan B."/>
            <person name="Xie Y."/>
            <person name="Rawsthorne H."/>
            <person name="Tamir D."/>
            <person name="Parker C."/>
            <person name="Breidt F."/>
            <person name="Broadbent J.R."/>
            <person name="Hutkins R."/>
            <person name="O'Sullivan D."/>
            <person name="Steele J."/>
            <person name="Unlu G."/>
            <person name="Saier M.H. Jr."/>
            <person name="Klaenhammer T."/>
            <person name="Richardson P."/>
            <person name="Kozyavkin S."/>
            <person name="Weimer B.C."/>
            <person name="Mills D.A."/>
        </authorList>
    </citation>
    <scope>NUCLEOTIDE SEQUENCE [LARGE SCALE GENOMIC DNA]</scope>
    <source>
        <strain>ATCC BAA-491 / LMD-9</strain>
    </source>
</reference>
<proteinExistence type="inferred from homology"/>
<feature type="chain" id="PRO_1000088640" description="Tyrosine--tRNA ligase">
    <location>
        <begin position="1"/>
        <end position="418"/>
    </location>
</feature>
<feature type="domain" description="S4 RNA-binding" evidence="1">
    <location>
        <begin position="352"/>
        <end position="418"/>
    </location>
</feature>
<feature type="short sequence motif" description="'HIGH' region">
    <location>
        <begin position="39"/>
        <end position="48"/>
    </location>
</feature>
<feature type="short sequence motif" description="'KMSKS' region">
    <location>
        <begin position="229"/>
        <end position="233"/>
    </location>
</feature>
<feature type="binding site" evidence="1">
    <location>
        <position position="34"/>
    </location>
    <ligand>
        <name>L-tyrosine</name>
        <dbReference type="ChEBI" id="CHEBI:58315"/>
    </ligand>
</feature>
<feature type="binding site" evidence="1">
    <location>
        <position position="169"/>
    </location>
    <ligand>
        <name>L-tyrosine</name>
        <dbReference type="ChEBI" id="CHEBI:58315"/>
    </ligand>
</feature>
<feature type="binding site" evidence="1">
    <location>
        <position position="173"/>
    </location>
    <ligand>
        <name>L-tyrosine</name>
        <dbReference type="ChEBI" id="CHEBI:58315"/>
    </ligand>
</feature>
<feature type="binding site" evidence="1">
    <location>
        <position position="232"/>
    </location>
    <ligand>
        <name>ATP</name>
        <dbReference type="ChEBI" id="CHEBI:30616"/>
    </ligand>
</feature>
<keyword id="KW-0030">Aminoacyl-tRNA synthetase</keyword>
<keyword id="KW-0067">ATP-binding</keyword>
<keyword id="KW-0963">Cytoplasm</keyword>
<keyword id="KW-0436">Ligase</keyword>
<keyword id="KW-0547">Nucleotide-binding</keyword>
<keyword id="KW-0648">Protein biosynthesis</keyword>
<keyword id="KW-0694">RNA-binding</keyword>
<dbReference type="EC" id="6.1.1.1" evidence="1"/>
<dbReference type="EMBL" id="CP000419">
    <property type="protein sequence ID" value="ABJ66972.1"/>
    <property type="molecule type" value="Genomic_DNA"/>
</dbReference>
<dbReference type="RefSeq" id="WP_011681693.1">
    <property type="nucleotide sequence ID" value="NC_008532.1"/>
</dbReference>
<dbReference type="SMR" id="Q03IK0"/>
<dbReference type="KEGG" id="ste:STER_1847"/>
<dbReference type="HOGENOM" id="CLU_024003_0_3_9"/>
<dbReference type="GO" id="GO:0005829">
    <property type="term" value="C:cytosol"/>
    <property type="evidence" value="ECO:0007669"/>
    <property type="project" value="TreeGrafter"/>
</dbReference>
<dbReference type="GO" id="GO:0005524">
    <property type="term" value="F:ATP binding"/>
    <property type="evidence" value="ECO:0007669"/>
    <property type="project" value="UniProtKB-UniRule"/>
</dbReference>
<dbReference type="GO" id="GO:0003723">
    <property type="term" value="F:RNA binding"/>
    <property type="evidence" value="ECO:0007669"/>
    <property type="project" value="UniProtKB-KW"/>
</dbReference>
<dbReference type="GO" id="GO:0004831">
    <property type="term" value="F:tyrosine-tRNA ligase activity"/>
    <property type="evidence" value="ECO:0007669"/>
    <property type="project" value="UniProtKB-UniRule"/>
</dbReference>
<dbReference type="GO" id="GO:0006437">
    <property type="term" value="P:tyrosyl-tRNA aminoacylation"/>
    <property type="evidence" value="ECO:0007669"/>
    <property type="project" value="UniProtKB-UniRule"/>
</dbReference>
<dbReference type="CDD" id="cd00165">
    <property type="entry name" value="S4"/>
    <property type="match status" value="1"/>
</dbReference>
<dbReference type="CDD" id="cd00805">
    <property type="entry name" value="TyrRS_core"/>
    <property type="match status" value="1"/>
</dbReference>
<dbReference type="FunFam" id="1.10.240.10:FF:000001">
    <property type="entry name" value="Tyrosine--tRNA ligase"/>
    <property type="match status" value="1"/>
</dbReference>
<dbReference type="FunFam" id="3.40.50.620:FF:000008">
    <property type="entry name" value="Tyrosine--tRNA ligase"/>
    <property type="match status" value="1"/>
</dbReference>
<dbReference type="Gene3D" id="3.40.50.620">
    <property type="entry name" value="HUPs"/>
    <property type="match status" value="1"/>
</dbReference>
<dbReference type="Gene3D" id="3.10.290.10">
    <property type="entry name" value="RNA-binding S4 domain"/>
    <property type="match status" value="1"/>
</dbReference>
<dbReference type="Gene3D" id="1.10.240.10">
    <property type="entry name" value="Tyrosyl-Transfer RNA Synthetase"/>
    <property type="match status" value="1"/>
</dbReference>
<dbReference type="HAMAP" id="MF_02006">
    <property type="entry name" value="Tyr_tRNA_synth_type1"/>
    <property type="match status" value="1"/>
</dbReference>
<dbReference type="InterPro" id="IPR001412">
    <property type="entry name" value="aa-tRNA-synth_I_CS"/>
</dbReference>
<dbReference type="InterPro" id="IPR002305">
    <property type="entry name" value="aa-tRNA-synth_Ic"/>
</dbReference>
<dbReference type="InterPro" id="IPR014729">
    <property type="entry name" value="Rossmann-like_a/b/a_fold"/>
</dbReference>
<dbReference type="InterPro" id="IPR002942">
    <property type="entry name" value="S4_RNA-bd"/>
</dbReference>
<dbReference type="InterPro" id="IPR036986">
    <property type="entry name" value="S4_RNA-bd_sf"/>
</dbReference>
<dbReference type="InterPro" id="IPR054608">
    <property type="entry name" value="SYY-like_C"/>
</dbReference>
<dbReference type="InterPro" id="IPR002307">
    <property type="entry name" value="Tyr-tRNA-ligase"/>
</dbReference>
<dbReference type="InterPro" id="IPR024088">
    <property type="entry name" value="Tyr-tRNA-ligase_bac-type"/>
</dbReference>
<dbReference type="InterPro" id="IPR024107">
    <property type="entry name" value="Tyr-tRNA-ligase_bac_1"/>
</dbReference>
<dbReference type="NCBIfam" id="TIGR00234">
    <property type="entry name" value="tyrS"/>
    <property type="match status" value="1"/>
</dbReference>
<dbReference type="PANTHER" id="PTHR11766:SF0">
    <property type="entry name" value="TYROSINE--TRNA LIGASE, MITOCHONDRIAL"/>
    <property type="match status" value="1"/>
</dbReference>
<dbReference type="PANTHER" id="PTHR11766">
    <property type="entry name" value="TYROSYL-TRNA SYNTHETASE"/>
    <property type="match status" value="1"/>
</dbReference>
<dbReference type="Pfam" id="PF22421">
    <property type="entry name" value="SYY_C-terminal"/>
    <property type="match status" value="1"/>
</dbReference>
<dbReference type="Pfam" id="PF00579">
    <property type="entry name" value="tRNA-synt_1b"/>
    <property type="match status" value="1"/>
</dbReference>
<dbReference type="PRINTS" id="PR01040">
    <property type="entry name" value="TRNASYNTHTYR"/>
</dbReference>
<dbReference type="SMART" id="SM00363">
    <property type="entry name" value="S4"/>
    <property type="match status" value="1"/>
</dbReference>
<dbReference type="SUPFAM" id="SSF55174">
    <property type="entry name" value="Alpha-L RNA-binding motif"/>
    <property type="match status" value="1"/>
</dbReference>
<dbReference type="SUPFAM" id="SSF52374">
    <property type="entry name" value="Nucleotidylyl transferase"/>
    <property type="match status" value="1"/>
</dbReference>
<dbReference type="PROSITE" id="PS00178">
    <property type="entry name" value="AA_TRNA_LIGASE_I"/>
    <property type="match status" value="1"/>
</dbReference>
<dbReference type="PROSITE" id="PS50889">
    <property type="entry name" value="S4"/>
    <property type="match status" value="1"/>
</dbReference>